<reference key="1">
    <citation type="journal article" date="1997" name="Mol. Phylogenet. Evol.">
        <title>Alpha-crystallin sequences support a galliform/anseriform clade.</title>
        <authorList>
            <person name="Caspers G.J."/>
            <person name="Uit de Weerd D."/>
            <person name="Wattel J."/>
            <person name="de Jong W.W."/>
        </authorList>
    </citation>
    <scope>NUCLEOTIDE SEQUENCE [MRNA]</scope>
    <source>
        <tissue>Lens</tissue>
    </source>
</reference>
<evidence type="ECO:0000250" key="1">
    <source>
        <dbReference type="UniProtKB" id="P02470"/>
    </source>
</evidence>
<evidence type="ECO:0000250" key="2">
    <source>
        <dbReference type="UniProtKB" id="P02489"/>
    </source>
</evidence>
<evidence type="ECO:0000255" key="3">
    <source>
        <dbReference type="PROSITE-ProRule" id="PRU00285"/>
    </source>
</evidence>
<organism>
    <name type="scientific">Columba livia</name>
    <name type="common">Rock dove</name>
    <dbReference type="NCBI Taxonomy" id="8932"/>
    <lineage>
        <taxon>Eukaryota</taxon>
        <taxon>Metazoa</taxon>
        <taxon>Chordata</taxon>
        <taxon>Craniata</taxon>
        <taxon>Vertebrata</taxon>
        <taxon>Euteleostomi</taxon>
        <taxon>Archelosauria</taxon>
        <taxon>Archosauria</taxon>
        <taxon>Dinosauria</taxon>
        <taxon>Saurischia</taxon>
        <taxon>Theropoda</taxon>
        <taxon>Coelurosauria</taxon>
        <taxon>Aves</taxon>
        <taxon>Neognathae</taxon>
        <taxon>Neoaves</taxon>
        <taxon>Columbimorphae</taxon>
        <taxon>Columbiformes</taxon>
        <taxon>Columbidae</taxon>
        <taxon>Columba</taxon>
    </lineage>
</organism>
<sequence length="149" mass="17059">RALGPLIPSRLFDQFFGEGLLEYDLLPWFSSTISPYYRQSLFRSVLESGISEVRSDREKFTIMLDVKHFSPEDLSVKIIDDFVEIHGKHSERQDDHGYISREFHRRYRLPANVDQAAITCSLSNDGMLTFSGPKVPANMDASHGERPIP</sequence>
<keyword id="KW-0963">Cytoplasm</keyword>
<keyword id="KW-0273">Eye lens protein</keyword>
<keyword id="KW-0479">Metal-binding</keyword>
<keyword id="KW-0539">Nucleus</keyword>
<keyword id="KW-0862">Zinc</keyword>
<name>CRYAA_COLLI</name>
<protein>
    <recommendedName>
        <fullName>Alpha-crystallin A chain</fullName>
    </recommendedName>
</protein>
<gene>
    <name type="primary">CRYAA</name>
</gene>
<comment type="function">
    <text evidence="2">Contributes to the transparency and refractive index of the lens. May act as a chaperone, preventing aggregation of various proteins under a wide range of stress conditions.</text>
</comment>
<comment type="subunit">
    <text evidence="1 2">Heteropolymer composed of three CRYAA and one CRYAB subunits (By similarity). Inter-subunit bridging via zinc ions enhances stability, which is crucial as there is no protein turn over in the lens. Can also form homodimers and homotetramers (dimers of dimers) which serve as the building blocks of homooligomers (By similarity). Within homooligomers, the zinc-binding motif is created from residues of 3 different molecules. His-89 and Glu-91 from one molecule are ligands of the zinc ion, and His-96 and His-143 residues from additional molecules complete the site with tetrahedral coordination geometry (By similarity). Part of a complex required for lens intermediate filament formation composed of BFSP1, BFSP2 and CRYAA (By similarity).</text>
</comment>
<comment type="subcellular location">
    <subcellularLocation>
        <location evidence="2">Cytoplasm</location>
    </subcellularLocation>
    <subcellularLocation>
        <location evidence="2">Nucleus</location>
    </subcellularLocation>
    <text evidence="2">Translocates to the nucleus during heat shock.</text>
</comment>
<comment type="similarity">
    <text evidence="3">Belongs to the small heat shock protein (HSP20) family.</text>
</comment>
<dbReference type="EMBL" id="X96593">
    <property type="protein sequence ID" value="CAA65411.1"/>
    <property type="molecule type" value="mRNA"/>
</dbReference>
<dbReference type="SMR" id="O12988"/>
<dbReference type="eggNOG" id="KOG3591">
    <property type="taxonomic scope" value="Eukaryota"/>
</dbReference>
<dbReference type="GO" id="GO:0005737">
    <property type="term" value="C:cytoplasm"/>
    <property type="evidence" value="ECO:0007669"/>
    <property type="project" value="UniProtKB-SubCell"/>
</dbReference>
<dbReference type="GO" id="GO:0005634">
    <property type="term" value="C:nucleus"/>
    <property type="evidence" value="ECO:0007669"/>
    <property type="project" value="UniProtKB-SubCell"/>
</dbReference>
<dbReference type="GO" id="GO:0046872">
    <property type="term" value="F:metal ion binding"/>
    <property type="evidence" value="ECO:0007669"/>
    <property type="project" value="UniProtKB-KW"/>
</dbReference>
<dbReference type="GO" id="GO:0005212">
    <property type="term" value="F:structural constituent of eye lens"/>
    <property type="evidence" value="ECO:0007669"/>
    <property type="project" value="UniProtKB-KW"/>
</dbReference>
<dbReference type="GO" id="GO:0051082">
    <property type="term" value="F:unfolded protein binding"/>
    <property type="evidence" value="ECO:0007669"/>
    <property type="project" value="TreeGrafter"/>
</dbReference>
<dbReference type="GO" id="GO:0002088">
    <property type="term" value="P:lens development in camera-type eye"/>
    <property type="evidence" value="ECO:0007669"/>
    <property type="project" value="TreeGrafter"/>
</dbReference>
<dbReference type="GO" id="GO:0043066">
    <property type="term" value="P:negative regulation of apoptotic process"/>
    <property type="evidence" value="ECO:0007669"/>
    <property type="project" value="TreeGrafter"/>
</dbReference>
<dbReference type="GO" id="GO:0042026">
    <property type="term" value="P:protein refolding"/>
    <property type="evidence" value="ECO:0007669"/>
    <property type="project" value="TreeGrafter"/>
</dbReference>
<dbReference type="GO" id="GO:0009408">
    <property type="term" value="P:response to heat"/>
    <property type="evidence" value="ECO:0007669"/>
    <property type="project" value="TreeGrafter"/>
</dbReference>
<dbReference type="CDD" id="cd06497">
    <property type="entry name" value="ACD_alphaA-crystallin_HspB4"/>
    <property type="match status" value="1"/>
</dbReference>
<dbReference type="FunFam" id="2.60.40.790:FF:000008">
    <property type="entry name" value="Alpha-crystallin A chain"/>
    <property type="match status" value="1"/>
</dbReference>
<dbReference type="Gene3D" id="2.60.40.790">
    <property type="match status" value="1"/>
</dbReference>
<dbReference type="InterPro" id="IPR002068">
    <property type="entry name" value="A-crystallin/Hsp20_dom"/>
</dbReference>
<dbReference type="InterPro" id="IPR055269">
    <property type="entry name" value="Alpha-crystallin/HSP_16"/>
</dbReference>
<dbReference type="InterPro" id="IPR001436">
    <property type="entry name" value="Alpha-crystallin/sHSP_animal"/>
</dbReference>
<dbReference type="InterPro" id="IPR003090">
    <property type="entry name" value="Alpha-crystallin_N"/>
</dbReference>
<dbReference type="InterPro" id="IPR008978">
    <property type="entry name" value="HSP20-like_chaperone"/>
</dbReference>
<dbReference type="PANTHER" id="PTHR45640:SF14">
    <property type="entry name" value="ALPHA-CRYSTALLIN A CHAIN"/>
    <property type="match status" value="1"/>
</dbReference>
<dbReference type="PANTHER" id="PTHR45640">
    <property type="entry name" value="HEAT SHOCK PROTEIN HSP-12.2-RELATED"/>
    <property type="match status" value="1"/>
</dbReference>
<dbReference type="Pfam" id="PF00525">
    <property type="entry name" value="Crystallin"/>
    <property type="match status" value="1"/>
</dbReference>
<dbReference type="Pfam" id="PF00011">
    <property type="entry name" value="HSP20"/>
    <property type="match status" value="1"/>
</dbReference>
<dbReference type="PIRSF" id="PIRSF036514">
    <property type="entry name" value="Sm_HSP_B1"/>
    <property type="match status" value="1"/>
</dbReference>
<dbReference type="PRINTS" id="PR00299">
    <property type="entry name" value="ACRYSTALLIN"/>
</dbReference>
<dbReference type="SUPFAM" id="SSF49764">
    <property type="entry name" value="HSP20-like chaperones"/>
    <property type="match status" value="1"/>
</dbReference>
<dbReference type="PROSITE" id="PS01031">
    <property type="entry name" value="SHSP"/>
    <property type="match status" value="1"/>
</dbReference>
<proteinExistence type="evidence at transcript level"/>
<feature type="chain" id="PRO_0000125894" description="Alpha-crystallin A chain">
    <location>
        <begin position="1" status="less than"/>
        <end position="149" status="greater than"/>
    </location>
</feature>
<feature type="domain" description="sHSP" evidence="3">
    <location>
        <begin position="41"/>
        <end position="149"/>
    </location>
</feature>
<feature type="binding site" evidence="1">
    <location>
        <position position="89"/>
    </location>
    <ligand>
        <name>Zn(2+)</name>
        <dbReference type="ChEBI" id="CHEBI:29105"/>
        <label>1</label>
    </ligand>
</feature>
<feature type="binding site" evidence="1">
    <location>
        <position position="91"/>
    </location>
    <ligand>
        <name>Zn(2+)</name>
        <dbReference type="ChEBI" id="CHEBI:29105"/>
        <label>1</label>
    </ligand>
</feature>
<feature type="binding site" evidence="1">
    <location>
        <position position="96"/>
    </location>
    <ligand>
        <name>Zn(2+)</name>
        <dbReference type="ChEBI" id="CHEBI:29105"/>
        <label>2</label>
    </ligand>
</feature>
<feature type="binding site" evidence="1">
    <location>
        <position position="143"/>
    </location>
    <ligand>
        <name>Zn(2+)</name>
        <dbReference type="ChEBI" id="CHEBI:29105"/>
        <label>3</label>
    </ligand>
</feature>
<feature type="non-terminal residue">
    <location>
        <position position="1"/>
    </location>
</feature>
<feature type="non-terminal residue">
    <location>
        <position position="149"/>
    </location>
</feature>
<accession>O12988</accession>